<reference key="1">
    <citation type="journal article" date="2002" name="Nucleic Acids Res.">
        <title>Genome sequence of Shigella flexneri 2a: insights into pathogenicity through comparison with genomes of Escherichia coli K12 and O157.</title>
        <authorList>
            <person name="Jin Q."/>
            <person name="Yuan Z."/>
            <person name="Xu J."/>
            <person name="Wang Y."/>
            <person name="Shen Y."/>
            <person name="Lu W."/>
            <person name="Wang J."/>
            <person name="Liu H."/>
            <person name="Yang J."/>
            <person name="Yang F."/>
            <person name="Zhang X."/>
            <person name="Zhang J."/>
            <person name="Yang G."/>
            <person name="Wu H."/>
            <person name="Qu D."/>
            <person name="Dong J."/>
            <person name="Sun L."/>
            <person name="Xue Y."/>
            <person name="Zhao A."/>
            <person name="Gao Y."/>
            <person name="Zhu J."/>
            <person name="Kan B."/>
            <person name="Ding K."/>
            <person name="Chen S."/>
            <person name="Cheng H."/>
            <person name="Yao Z."/>
            <person name="He B."/>
            <person name="Chen R."/>
            <person name="Ma D."/>
            <person name="Qiang B."/>
            <person name="Wen Y."/>
            <person name="Hou Y."/>
            <person name="Yu J."/>
        </authorList>
    </citation>
    <scope>NUCLEOTIDE SEQUENCE [LARGE SCALE GENOMIC DNA]</scope>
    <source>
        <strain>301 / Serotype 2a</strain>
    </source>
</reference>
<reference key="2">
    <citation type="journal article" date="2003" name="Infect. Immun.">
        <title>Complete genome sequence and comparative genomics of Shigella flexneri serotype 2a strain 2457T.</title>
        <authorList>
            <person name="Wei J."/>
            <person name="Goldberg M.B."/>
            <person name="Burland V."/>
            <person name="Venkatesan M.M."/>
            <person name="Deng W."/>
            <person name="Fournier G."/>
            <person name="Mayhew G.F."/>
            <person name="Plunkett G. III"/>
            <person name="Rose D.J."/>
            <person name="Darling A."/>
            <person name="Mau B."/>
            <person name="Perna N.T."/>
            <person name="Payne S.M."/>
            <person name="Runyen-Janecky L.J."/>
            <person name="Zhou S."/>
            <person name="Schwartz D.C."/>
            <person name="Blattner F.R."/>
        </authorList>
    </citation>
    <scope>NUCLEOTIDE SEQUENCE [LARGE SCALE GENOMIC DNA]</scope>
    <source>
        <strain>ATCC 700930 / 2457T / Serotype 2a</strain>
    </source>
</reference>
<proteinExistence type="inferred from homology"/>
<comment type="function">
    <text evidence="1">Catalyzes the transfer of endogenously produced octanoic acid from octanoyl-acyl-carrier-protein onto the lipoyl domains of lipoate-dependent enzymes. Lipoyl-ACP can also act as a substrate although octanoyl-ACP is likely to be the physiological substrate.</text>
</comment>
<comment type="catalytic activity">
    <reaction evidence="1">
        <text>octanoyl-[ACP] + L-lysyl-[protein] = N(6)-octanoyl-L-lysyl-[protein] + holo-[ACP] + H(+)</text>
        <dbReference type="Rhea" id="RHEA:17665"/>
        <dbReference type="Rhea" id="RHEA-COMP:9636"/>
        <dbReference type="Rhea" id="RHEA-COMP:9685"/>
        <dbReference type="Rhea" id="RHEA-COMP:9752"/>
        <dbReference type="Rhea" id="RHEA-COMP:9928"/>
        <dbReference type="ChEBI" id="CHEBI:15378"/>
        <dbReference type="ChEBI" id="CHEBI:29969"/>
        <dbReference type="ChEBI" id="CHEBI:64479"/>
        <dbReference type="ChEBI" id="CHEBI:78463"/>
        <dbReference type="ChEBI" id="CHEBI:78809"/>
        <dbReference type="EC" id="2.3.1.181"/>
    </reaction>
</comment>
<comment type="pathway">
    <text evidence="1">Protein modification; protein lipoylation via endogenous pathway; protein N(6)-(lipoyl)lysine from octanoyl-[acyl-carrier-protein]: step 1/2.</text>
</comment>
<comment type="subcellular location">
    <subcellularLocation>
        <location evidence="1">Cytoplasm</location>
    </subcellularLocation>
</comment>
<comment type="miscellaneous">
    <text evidence="1">In the reaction, the free carboxyl group of octanoic acid is attached via an amide linkage to the epsilon-amino group of a specific lysine residue of lipoyl domains of lipoate-dependent enzymes.</text>
</comment>
<comment type="similarity">
    <text evidence="1">Belongs to the LipB family.</text>
</comment>
<comment type="sequence caution" evidence="3">
    <conflict type="erroneous initiation">
        <sequence resource="EMBL-CDS" id="AAN42287"/>
    </conflict>
    <text>Truncated N-terminus.</text>
</comment>
<comment type="sequence caution" evidence="3">
    <conflict type="erroneous initiation">
        <sequence resource="EMBL-CDS" id="AAP16158"/>
    </conflict>
    <text>Truncated N-terminus.</text>
</comment>
<organism>
    <name type="scientific">Shigella flexneri</name>
    <dbReference type="NCBI Taxonomy" id="623"/>
    <lineage>
        <taxon>Bacteria</taxon>
        <taxon>Pseudomonadati</taxon>
        <taxon>Pseudomonadota</taxon>
        <taxon>Gammaproteobacteria</taxon>
        <taxon>Enterobacterales</taxon>
        <taxon>Enterobacteriaceae</taxon>
        <taxon>Shigella</taxon>
    </lineage>
</organism>
<name>LIPB_SHIFL</name>
<evidence type="ECO:0000255" key="1">
    <source>
        <dbReference type="HAMAP-Rule" id="MF_00013"/>
    </source>
</evidence>
<evidence type="ECO:0000255" key="2">
    <source>
        <dbReference type="PROSITE-ProRule" id="PRU01067"/>
    </source>
</evidence>
<evidence type="ECO:0000305" key="3"/>
<accession>Q7UDD0</accession>
<accession>Q821B4</accession>
<feature type="chain" id="PRO_0000062879" description="Octanoyltransferase">
    <location>
        <begin position="1"/>
        <end position="213"/>
    </location>
</feature>
<feature type="domain" description="BPL/LPL catalytic" evidence="2">
    <location>
        <begin position="32"/>
        <end position="207"/>
    </location>
</feature>
<feature type="active site" description="Acyl-thioester intermediate" evidence="1">
    <location>
        <position position="169"/>
    </location>
</feature>
<feature type="binding site" evidence="1">
    <location>
        <begin position="71"/>
        <end position="78"/>
    </location>
    <ligand>
        <name>substrate</name>
    </ligand>
</feature>
<feature type="binding site" evidence="1">
    <location>
        <begin position="138"/>
        <end position="140"/>
    </location>
    <ligand>
        <name>substrate</name>
    </ligand>
</feature>
<feature type="binding site" evidence="1">
    <location>
        <begin position="151"/>
        <end position="153"/>
    </location>
    <ligand>
        <name>substrate</name>
    </ligand>
</feature>
<feature type="site" description="Lowers pKa of active site Cys" evidence="1">
    <location>
        <position position="135"/>
    </location>
</feature>
<dbReference type="EC" id="2.3.1.181" evidence="1"/>
<dbReference type="EMBL" id="AE005674">
    <property type="protein sequence ID" value="AAN42287.2"/>
    <property type="status" value="ALT_INIT"/>
    <property type="molecule type" value="Genomic_DNA"/>
</dbReference>
<dbReference type="EMBL" id="AE014073">
    <property type="protein sequence ID" value="AAP16158.1"/>
    <property type="status" value="ALT_INIT"/>
    <property type="molecule type" value="Genomic_DNA"/>
</dbReference>
<dbReference type="RefSeq" id="NP_706580.4">
    <property type="nucleotide sequence ID" value="NC_004337.2"/>
</dbReference>
<dbReference type="RefSeq" id="WP_000284045.1">
    <property type="nucleotide sequence ID" value="NZ_WPGW01000002.1"/>
</dbReference>
<dbReference type="SMR" id="Q7UDD0"/>
<dbReference type="STRING" id="198214.SF0651"/>
<dbReference type="PaxDb" id="198214-SF0651"/>
<dbReference type="GeneID" id="1027547"/>
<dbReference type="KEGG" id="sfl:SF0651"/>
<dbReference type="KEGG" id="sfx:S0673"/>
<dbReference type="PATRIC" id="fig|198214.7.peg.758"/>
<dbReference type="HOGENOM" id="CLU_035168_3_1_6"/>
<dbReference type="UniPathway" id="UPA00538">
    <property type="reaction ID" value="UER00592"/>
</dbReference>
<dbReference type="Proteomes" id="UP000001006">
    <property type="component" value="Chromosome"/>
</dbReference>
<dbReference type="Proteomes" id="UP000002673">
    <property type="component" value="Chromosome"/>
</dbReference>
<dbReference type="GO" id="GO:0005737">
    <property type="term" value="C:cytoplasm"/>
    <property type="evidence" value="ECO:0007669"/>
    <property type="project" value="UniProtKB-SubCell"/>
</dbReference>
<dbReference type="GO" id="GO:0033819">
    <property type="term" value="F:lipoyl(octanoyl) transferase activity"/>
    <property type="evidence" value="ECO:0007669"/>
    <property type="project" value="UniProtKB-EC"/>
</dbReference>
<dbReference type="GO" id="GO:0036211">
    <property type="term" value="P:protein modification process"/>
    <property type="evidence" value="ECO:0007669"/>
    <property type="project" value="InterPro"/>
</dbReference>
<dbReference type="CDD" id="cd16444">
    <property type="entry name" value="LipB"/>
    <property type="match status" value="1"/>
</dbReference>
<dbReference type="FunFam" id="3.30.930.10:FF:000020">
    <property type="entry name" value="Octanoyltransferase"/>
    <property type="match status" value="1"/>
</dbReference>
<dbReference type="Gene3D" id="3.30.930.10">
    <property type="entry name" value="Bira Bifunctional Protein, Domain 2"/>
    <property type="match status" value="1"/>
</dbReference>
<dbReference type="HAMAP" id="MF_00013">
    <property type="entry name" value="LipB"/>
    <property type="match status" value="1"/>
</dbReference>
<dbReference type="InterPro" id="IPR045864">
    <property type="entry name" value="aa-tRNA-synth_II/BPL/LPL"/>
</dbReference>
<dbReference type="InterPro" id="IPR004143">
    <property type="entry name" value="BPL_LPL_catalytic"/>
</dbReference>
<dbReference type="InterPro" id="IPR000544">
    <property type="entry name" value="Octanoyltransferase"/>
</dbReference>
<dbReference type="InterPro" id="IPR020605">
    <property type="entry name" value="Octanoyltransferase_CS"/>
</dbReference>
<dbReference type="NCBIfam" id="TIGR00214">
    <property type="entry name" value="lipB"/>
    <property type="match status" value="1"/>
</dbReference>
<dbReference type="NCBIfam" id="NF010922">
    <property type="entry name" value="PRK14342.1"/>
    <property type="match status" value="1"/>
</dbReference>
<dbReference type="PANTHER" id="PTHR10993:SF7">
    <property type="entry name" value="LIPOYLTRANSFERASE 2, MITOCHONDRIAL-RELATED"/>
    <property type="match status" value="1"/>
</dbReference>
<dbReference type="PANTHER" id="PTHR10993">
    <property type="entry name" value="OCTANOYLTRANSFERASE"/>
    <property type="match status" value="1"/>
</dbReference>
<dbReference type="Pfam" id="PF21948">
    <property type="entry name" value="LplA-B_cat"/>
    <property type="match status" value="1"/>
</dbReference>
<dbReference type="PIRSF" id="PIRSF016262">
    <property type="entry name" value="LPLase"/>
    <property type="match status" value="1"/>
</dbReference>
<dbReference type="SUPFAM" id="SSF55681">
    <property type="entry name" value="Class II aaRS and biotin synthetases"/>
    <property type="match status" value="1"/>
</dbReference>
<dbReference type="PROSITE" id="PS51733">
    <property type="entry name" value="BPL_LPL_CATALYTIC"/>
    <property type="match status" value="1"/>
</dbReference>
<dbReference type="PROSITE" id="PS01313">
    <property type="entry name" value="LIPB"/>
    <property type="match status" value="1"/>
</dbReference>
<sequence length="213" mass="23910">MYQDKILVRQLGLQPYEPISRAMHEFTDTRDNSTLDEIWLVEHYPVFTQGQAGKAEHILMPGDIPVIQSDRGGQVTYHGPGQQVMYVLLNLKRRKLGVRELVTLLEQTVVNTLAELGIEAHPRADAPGVYVGEKKICSLGLRIRRGCSFHGLALNVNMDLSPFLRINPCGYAGMEMAKISQWKPEATTNNIAPRLLENILALLNNPDFEYITA</sequence>
<gene>
    <name evidence="1" type="primary">lipB</name>
    <name type="ordered locus">SF0651</name>
    <name type="ordered locus">S0673</name>
</gene>
<protein>
    <recommendedName>
        <fullName evidence="1">Octanoyltransferase</fullName>
        <ecNumber evidence="1">2.3.1.181</ecNumber>
    </recommendedName>
    <alternativeName>
        <fullName evidence="1">Lipoate-protein ligase B</fullName>
    </alternativeName>
    <alternativeName>
        <fullName evidence="1">Lipoyl/octanoyl transferase</fullName>
    </alternativeName>
    <alternativeName>
        <fullName evidence="1">Octanoyl-[acyl-carrier-protein]-protein N-octanoyltransferase</fullName>
    </alternativeName>
</protein>
<keyword id="KW-0012">Acyltransferase</keyword>
<keyword id="KW-0963">Cytoplasm</keyword>
<keyword id="KW-1185">Reference proteome</keyword>
<keyword id="KW-0808">Transferase</keyword>